<feature type="chain" id="PRO_0000286269" description="Spermidine/putrescine import ATP-binding protein PotA">
    <location>
        <begin position="1"/>
        <end position="417"/>
    </location>
</feature>
<feature type="domain" description="ABC transporter" evidence="1">
    <location>
        <begin position="5"/>
        <end position="308"/>
    </location>
</feature>
<feature type="region of interest" description="Insert">
    <location>
        <begin position="105"/>
        <end position="177"/>
    </location>
</feature>
<feature type="binding site" evidence="1">
    <location>
        <begin position="37"/>
        <end position="44"/>
    </location>
    <ligand>
        <name>ATP</name>
        <dbReference type="ChEBI" id="CHEBI:30616"/>
    </ligand>
</feature>
<sequence length="417" mass="47836">MKTLIILKDLTKVFDNQLILRGINLEIKQNEFVTLLGPSGCGKTTILRILGGFENPSSGEVLFQEKSILNVAAHKRPINTVFQKYALFPHLNVFENVAFGLRLKDFNSKIKANLSLNKTHYQTNKANLSKTFHQELTKDLTQEKTTQITHNFNNQIETLTKDFETKQTALKCKKINKKEQEEQIQKEVLKYLKIMGLQGLEKRTIEQLSGGQQQRVAIARALINKPQVLLLDEPLSNLDLKLKQEMQYELKEIQKNSGITFLFVTHDQEEAFTMSDKVVVMNHGEIQQIGSPEDIYNEPANRFVAQFVGESNLIKGVMKDDFLVHFDNQTFNCVDKGFRKEENVDIVIRPEDIDIVSQGKGLITGIVQSIIFKGVHWEIDVKTAQRTYTIHTTDHVELNKQVDITFNPEDIHVMEIW</sequence>
<organism>
    <name type="scientific">Onion yellows phytoplasma (strain OY-M)</name>
    <dbReference type="NCBI Taxonomy" id="262768"/>
    <lineage>
        <taxon>Bacteria</taxon>
        <taxon>Bacillati</taxon>
        <taxon>Mycoplasmatota</taxon>
        <taxon>Mollicutes</taxon>
        <taxon>Acholeplasmatales</taxon>
        <taxon>Acholeplasmataceae</taxon>
        <taxon>Candidatus Phytoplasma</taxon>
        <taxon>16SrI (Aster yellows group)</taxon>
    </lineage>
</organism>
<evidence type="ECO:0000255" key="1">
    <source>
        <dbReference type="HAMAP-Rule" id="MF_01726"/>
    </source>
</evidence>
<name>POTA_ONYPE</name>
<comment type="function">
    <text evidence="1">Part of the ABC transporter complex PotABCD involved in spermidine/putrescine import. Responsible for energy coupling to the transport system.</text>
</comment>
<comment type="catalytic activity">
    <reaction evidence="1">
        <text>ATP + H2O + polyamine-[polyamine-binding protein]Side 1 = ADP + phosphate + polyamineSide 2 + [polyamine-binding protein]Side 1.</text>
        <dbReference type="EC" id="7.6.2.11"/>
    </reaction>
</comment>
<comment type="subunit">
    <text evidence="1">The complex is composed of two ATP-binding proteins (PotA), two transmembrane proteins (PotB and PotC) and a solute-binding protein (PotD).</text>
</comment>
<comment type="subcellular location">
    <subcellularLocation>
        <location evidence="1">Cell membrane</location>
        <topology evidence="1">Peripheral membrane protein</topology>
    </subcellularLocation>
</comment>
<comment type="similarity">
    <text evidence="1">Belongs to the ABC transporter superfamily. Spermidine/putrescine importer (TC 3.A.1.11.1) family.</text>
</comment>
<accession>Q6YPR6</accession>
<gene>
    <name evidence="1" type="primary">potA</name>
    <name type="ordered locus">PAM_659</name>
</gene>
<proteinExistence type="inferred from homology"/>
<reference key="1">
    <citation type="journal article" date="2004" name="Nat. Genet.">
        <title>Reductive evolution suggested from the complete genome sequence of a plant-pathogenic phytoplasma.</title>
        <authorList>
            <person name="Oshima K."/>
            <person name="Kakizawa S."/>
            <person name="Nishigawa H."/>
            <person name="Jung H.-Y."/>
            <person name="Wei W."/>
            <person name="Suzuki S."/>
            <person name="Arashida R."/>
            <person name="Nakata D."/>
            <person name="Miyata S."/>
            <person name="Ugaki M."/>
            <person name="Namba S."/>
        </authorList>
    </citation>
    <scope>NUCLEOTIDE SEQUENCE [LARGE SCALE GENOMIC DNA]</scope>
    <source>
        <strain>OY-M</strain>
    </source>
</reference>
<keyword id="KW-0067">ATP-binding</keyword>
<keyword id="KW-1003">Cell membrane</keyword>
<keyword id="KW-0472">Membrane</keyword>
<keyword id="KW-0547">Nucleotide-binding</keyword>
<keyword id="KW-1278">Translocase</keyword>
<keyword id="KW-0813">Transport</keyword>
<protein>
    <recommendedName>
        <fullName evidence="1">Spermidine/putrescine import ATP-binding protein PotA</fullName>
        <ecNumber evidence="1">7.6.2.11</ecNumber>
    </recommendedName>
</protein>
<dbReference type="EC" id="7.6.2.11" evidence="1"/>
<dbReference type="EMBL" id="AP006628">
    <property type="protein sequence ID" value="BAD04744.1"/>
    <property type="molecule type" value="Genomic_DNA"/>
</dbReference>
<dbReference type="SMR" id="Q6YPR6"/>
<dbReference type="STRING" id="262768.PAM_659"/>
<dbReference type="KEGG" id="poy:PAM_659"/>
<dbReference type="eggNOG" id="COG3839">
    <property type="taxonomic scope" value="Bacteria"/>
</dbReference>
<dbReference type="HOGENOM" id="CLU_000604_1_1_14"/>
<dbReference type="BioCyc" id="OYEL262768:G1G26-804-MONOMER"/>
<dbReference type="Proteomes" id="UP000002523">
    <property type="component" value="Chromosome"/>
</dbReference>
<dbReference type="GO" id="GO:0043190">
    <property type="term" value="C:ATP-binding cassette (ABC) transporter complex"/>
    <property type="evidence" value="ECO:0007669"/>
    <property type="project" value="InterPro"/>
</dbReference>
<dbReference type="GO" id="GO:0015417">
    <property type="term" value="F:ABC-type polyamine transporter activity"/>
    <property type="evidence" value="ECO:0007669"/>
    <property type="project" value="UniProtKB-EC"/>
</dbReference>
<dbReference type="GO" id="GO:0005524">
    <property type="term" value="F:ATP binding"/>
    <property type="evidence" value="ECO:0007669"/>
    <property type="project" value="UniProtKB-KW"/>
</dbReference>
<dbReference type="GO" id="GO:0016887">
    <property type="term" value="F:ATP hydrolysis activity"/>
    <property type="evidence" value="ECO:0007669"/>
    <property type="project" value="InterPro"/>
</dbReference>
<dbReference type="Gene3D" id="2.40.50.100">
    <property type="match status" value="1"/>
</dbReference>
<dbReference type="Gene3D" id="2.40.50.140">
    <property type="entry name" value="Nucleic acid-binding proteins"/>
    <property type="match status" value="1"/>
</dbReference>
<dbReference type="Gene3D" id="3.40.50.300">
    <property type="entry name" value="P-loop containing nucleotide triphosphate hydrolases"/>
    <property type="match status" value="1"/>
</dbReference>
<dbReference type="InterPro" id="IPR003593">
    <property type="entry name" value="AAA+_ATPase"/>
</dbReference>
<dbReference type="InterPro" id="IPR050093">
    <property type="entry name" value="ABC_SmlMolc_Importer"/>
</dbReference>
<dbReference type="InterPro" id="IPR003439">
    <property type="entry name" value="ABC_transporter-like_ATP-bd"/>
</dbReference>
<dbReference type="InterPro" id="IPR017871">
    <property type="entry name" value="ABC_transporter-like_CS"/>
</dbReference>
<dbReference type="InterPro" id="IPR008995">
    <property type="entry name" value="Mo/tungstate-bd_C_term_dom"/>
</dbReference>
<dbReference type="InterPro" id="IPR012340">
    <property type="entry name" value="NA-bd_OB-fold"/>
</dbReference>
<dbReference type="InterPro" id="IPR027417">
    <property type="entry name" value="P-loop_NTPase"/>
</dbReference>
<dbReference type="InterPro" id="IPR013611">
    <property type="entry name" value="Transp-assoc_OB_typ2"/>
</dbReference>
<dbReference type="PANTHER" id="PTHR42781">
    <property type="entry name" value="SPERMIDINE/PUTRESCINE IMPORT ATP-BINDING PROTEIN POTA"/>
    <property type="match status" value="1"/>
</dbReference>
<dbReference type="PANTHER" id="PTHR42781:SF4">
    <property type="entry name" value="SPERMIDINE_PUTRESCINE IMPORT ATP-BINDING PROTEIN POTA"/>
    <property type="match status" value="1"/>
</dbReference>
<dbReference type="Pfam" id="PF00005">
    <property type="entry name" value="ABC_tran"/>
    <property type="match status" value="1"/>
</dbReference>
<dbReference type="Pfam" id="PF08402">
    <property type="entry name" value="TOBE_2"/>
    <property type="match status" value="1"/>
</dbReference>
<dbReference type="SMART" id="SM00382">
    <property type="entry name" value="AAA"/>
    <property type="match status" value="1"/>
</dbReference>
<dbReference type="SUPFAM" id="SSF50331">
    <property type="entry name" value="MOP-like"/>
    <property type="match status" value="1"/>
</dbReference>
<dbReference type="SUPFAM" id="SSF52540">
    <property type="entry name" value="P-loop containing nucleoside triphosphate hydrolases"/>
    <property type="match status" value="1"/>
</dbReference>
<dbReference type="PROSITE" id="PS00211">
    <property type="entry name" value="ABC_TRANSPORTER_1"/>
    <property type="match status" value="1"/>
</dbReference>
<dbReference type="PROSITE" id="PS50893">
    <property type="entry name" value="ABC_TRANSPORTER_2"/>
    <property type="match status" value="1"/>
</dbReference>
<dbReference type="PROSITE" id="PS51305">
    <property type="entry name" value="POTA"/>
    <property type="match status" value="1"/>
</dbReference>